<organism>
    <name type="scientific">Thermococcus kodakarensis (strain ATCC BAA-918 / JCM 12380 / KOD1)</name>
    <name type="common">Pyrococcus kodakaraensis (strain KOD1)</name>
    <dbReference type="NCBI Taxonomy" id="69014"/>
    <lineage>
        <taxon>Archaea</taxon>
        <taxon>Methanobacteriati</taxon>
        <taxon>Methanobacteriota</taxon>
        <taxon>Thermococci</taxon>
        <taxon>Thermococcales</taxon>
        <taxon>Thermococcaceae</taxon>
        <taxon>Thermococcus</taxon>
    </lineage>
</organism>
<evidence type="ECO:0000250" key="1">
    <source>
        <dbReference type="UniProtKB" id="O59245"/>
    </source>
</evidence>
<evidence type="ECO:0000256" key="2">
    <source>
        <dbReference type="SAM" id="MobiDB-lite"/>
    </source>
</evidence>
<evidence type="ECO:0000305" key="3"/>
<name>RTCB_THEKO</name>
<feature type="chain" id="PRO_0000232544" description="tRNA-splicing ligase RtcB">
    <location>
        <begin position="1"/>
        <end position="482"/>
    </location>
</feature>
<feature type="region of interest" description="Disordered" evidence="2">
    <location>
        <begin position="176"/>
        <end position="197"/>
    </location>
</feature>
<feature type="active site" description="GMP-histidine intermediate" evidence="1">
    <location>
        <position position="405"/>
    </location>
</feature>
<feature type="binding site" evidence="1">
    <location>
        <position position="97"/>
    </location>
    <ligand>
        <name>Mn(2+)</name>
        <dbReference type="ChEBI" id="CHEBI:29035"/>
        <label>1</label>
    </ligand>
</feature>
<feature type="binding site" evidence="1">
    <location>
        <position position="100"/>
    </location>
    <ligand>
        <name>Mn(2+)</name>
        <dbReference type="ChEBI" id="CHEBI:29035"/>
        <label>1</label>
    </ligand>
</feature>
<feature type="binding site" evidence="1">
    <location>
        <position position="100"/>
    </location>
    <ligand>
        <name>Mn(2+)</name>
        <dbReference type="ChEBI" id="CHEBI:29035"/>
        <label>2</label>
    </ligand>
</feature>
<feature type="binding site" evidence="1">
    <location>
        <begin position="204"/>
        <end position="208"/>
    </location>
    <ligand>
        <name>GMP</name>
        <dbReference type="ChEBI" id="CHEBI:58115"/>
    </ligand>
</feature>
<feature type="binding site" evidence="1">
    <location>
        <position position="205"/>
    </location>
    <ligand>
        <name>Mn(2+)</name>
        <dbReference type="ChEBI" id="CHEBI:29035"/>
        <label>1</label>
    </ligand>
</feature>
<feature type="binding site" evidence="1">
    <location>
        <position position="236"/>
    </location>
    <ligand>
        <name>Mn(2+)</name>
        <dbReference type="ChEBI" id="CHEBI:29035"/>
        <label>2</label>
    </ligand>
</feature>
<feature type="binding site" evidence="1">
    <location>
        <begin position="330"/>
        <end position="331"/>
    </location>
    <ligand>
        <name>GMP</name>
        <dbReference type="ChEBI" id="CHEBI:58115"/>
    </ligand>
</feature>
<feature type="binding site" evidence="1">
    <location>
        <position position="330"/>
    </location>
    <ligand>
        <name>Mn(2+)</name>
        <dbReference type="ChEBI" id="CHEBI:29035"/>
        <label>2</label>
    </ligand>
</feature>
<feature type="binding site" evidence="1">
    <location>
        <begin position="379"/>
        <end position="382"/>
    </location>
    <ligand>
        <name>GMP</name>
        <dbReference type="ChEBI" id="CHEBI:58115"/>
    </ligand>
</feature>
<feature type="binding site" evidence="1">
    <location>
        <position position="386"/>
    </location>
    <ligand>
        <name>GMP</name>
        <dbReference type="ChEBI" id="CHEBI:58115"/>
    </ligand>
</feature>
<feature type="binding site" evidence="1">
    <location>
        <begin position="405"/>
        <end position="408"/>
    </location>
    <ligand>
        <name>GMP</name>
        <dbReference type="ChEBI" id="CHEBI:58115"/>
    </ligand>
</feature>
<feature type="binding site" evidence="1">
    <location>
        <position position="481"/>
    </location>
    <ligand>
        <name>GMP</name>
        <dbReference type="ChEBI" id="CHEBI:58115"/>
    </ligand>
</feature>
<sequence length="482" mass="53618">MREMVPLKRIDKIRWEIPKFDKRMRVPGRVYADDQLIEKMKQDRTLEQAANVAMLPGIYKYSIVMPDGHQGYGFPIGGVAAFDAKEGVISPGGVGYDINCGVRLIRTNLTKDEVRPKIKELVDTLFKNVPSGLGSKGRVRLHWTQLDDVLADGAKWAVDNGYGWERDLEHLEEGGRMEGADPDAVSQKAKQRGAPQLGSLGSGNHFLEVQYVDKVYNEEIAKAYGLFEGQVVVMVHTGSRGLGHQVASDYLRIMEKANRKYGVPWPDRELVSVPFQSEEGQQYFSAMKAAANFAWANRQMITHWVRESFEEVFKRKAEDMEMEIVYDVAHNIAKLEEHEVDGKKVKVVVHRKGATRAFPAGHPDVPRAYRDVGQPVLIPGSMGTASYVLAGAEGSMRETFGSSCHGAGRLLSRKAATRQYRGDRLRNELLQRGIYVRAASLRVVAEEAPGAYKSVDNVVQVVHEAGIANLVARMRPMGVAKG</sequence>
<proteinExistence type="inferred from homology"/>
<dbReference type="EC" id="6.5.1.8" evidence="1"/>
<dbReference type="EMBL" id="AP006878">
    <property type="protein sequence ID" value="BAD84547.1"/>
    <property type="molecule type" value="Genomic_DNA"/>
</dbReference>
<dbReference type="SMR" id="Q5JCZ1"/>
<dbReference type="STRING" id="69014.TK0358"/>
<dbReference type="EnsemblBacteria" id="BAD84547">
    <property type="protein sequence ID" value="BAD84547"/>
    <property type="gene ID" value="TK0358"/>
</dbReference>
<dbReference type="KEGG" id="tko:TK0358"/>
<dbReference type="PATRIC" id="fig|69014.16.peg.355"/>
<dbReference type="eggNOG" id="arCOG04246">
    <property type="taxonomic scope" value="Archaea"/>
</dbReference>
<dbReference type="HOGENOM" id="CLU_022279_0_1_2"/>
<dbReference type="InParanoid" id="Q5JCZ1"/>
<dbReference type="PhylomeDB" id="Q5JCZ1"/>
<dbReference type="Proteomes" id="UP000000536">
    <property type="component" value="Chromosome"/>
</dbReference>
<dbReference type="GO" id="GO:0005525">
    <property type="term" value="F:GTP binding"/>
    <property type="evidence" value="ECO:0007669"/>
    <property type="project" value="UniProtKB-KW"/>
</dbReference>
<dbReference type="GO" id="GO:0046872">
    <property type="term" value="F:metal ion binding"/>
    <property type="evidence" value="ECO:0007669"/>
    <property type="project" value="UniProtKB-KW"/>
</dbReference>
<dbReference type="GO" id="GO:0170057">
    <property type="term" value="F:RNA ligase (GTP) activity"/>
    <property type="evidence" value="ECO:0007669"/>
    <property type="project" value="UniProtKB-EC"/>
</dbReference>
<dbReference type="GO" id="GO:0006388">
    <property type="term" value="P:tRNA splicing, via endonucleolytic cleavage and ligation"/>
    <property type="evidence" value="ECO:0000318"/>
    <property type="project" value="GO_Central"/>
</dbReference>
<dbReference type="FunFam" id="3.90.1860.10:FF:000007">
    <property type="entry name" value="tRNA-splicing ligase RtcB"/>
    <property type="match status" value="1"/>
</dbReference>
<dbReference type="Gene3D" id="3.90.1860.10">
    <property type="entry name" value="tRNA-splicing ligase RtcB"/>
    <property type="match status" value="1"/>
</dbReference>
<dbReference type="InterPro" id="IPR001233">
    <property type="entry name" value="RtcB"/>
</dbReference>
<dbReference type="InterPro" id="IPR036025">
    <property type="entry name" value="RtcB-like_sf"/>
</dbReference>
<dbReference type="PANTHER" id="PTHR11118">
    <property type="entry name" value="RNA-SPLICING LIGASE RTCB HOMOLOG"/>
    <property type="match status" value="1"/>
</dbReference>
<dbReference type="PANTHER" id="PTHR11118:SF1">
    <property type="entry name" value="RNA-SPLICING LIGASE RTCB HOMOLOG"/>
    <property type="match status" value="1"/>
</dbReference>
<dbReference type="Pfam" id="PF01139">
    <property type="entry name" value="RtcB"/>
    <property type="match status" value="1"/>
</dbReference>
<dbReference type="SUPFAM" id="SSF103365">
    <property type="entry name" value="Hypothetical protein PH1602"/>
    <property type="match status" value="1"/>
</dbReference>
<gene>
    <name type="primary">rtcB</name>
    <name type="ordered locus">TK0358</name>
</gene>
<comment type="function">
    <text evidence="1">Essential for tRNA splicing and maturation. Acts by directly joining spliced tRNA halves to mature-sized tRNAs. Joins RNA with 2',3'-cyclic-phosphate or 3'-phosphate ends to RNA with 5'-hydroxy ends.</text>
</comment>
<comment type="catalytic activity">
    <reaction evidence="1">
        <text>a 3'-end 3'-phospho-ribonucleotide-RNA + a 5'-end dephospho-ribonucleoside-RNA + GTP = a ribonucleotidyl-ribonucleotide-RNA + GMP + diphosphate</text>
        <dbReference type="Rhea" id="RHEA:68076"/>
        <dbReference type="Rhea" id="RHEA-COMP:10463"/>
        <dbReference type="Rhea" id="RHEA-COMP:13936"/>
        <dbReference type="Rhea" id="RHEA-COMP:17355"/>
        <dbReference type="ChEBI" id="CHEBI:33019"/>
        <dbReference type="ChEBI" id="CHEBI:37565"/>
        <dbReference type="ChEBI" id="CHEBI:58115"/>
        <dbReference type="ChEBI" id="CHEBI:83062"/>
        <dbReference type="ChEBI" id="CHEBI:138284"/>
        <dbReference type="ChEBI" id="CHEBI:173118"/>
        <dbReference type="EC" id="6.5.1.8"/>
    </reaction>
</comment>
<comment type="catalytic activity">
    <reaction evidence="1">
        <text>a 3'-end 2',3'-cyclophospho-ribonucleotide-RNA + a 5'-end dephospho-ribonucleoside-RNA + GTP + H2O = a ribonucleotidyl-ribonucleotide-RNA + GMP + diphosphate + H(+)</text>
        <dbReference type="Rhea" id="RHEA:68080"/>
        <dbReference type="Rhea" id="RHEA-COMP:10464"/>
        <dbReference type="Rhea" id="RHEA-COMP:13936"/>
        <dbReference type="Rhea" id="RHEA-COMP:17355"/>
        <dbReference type="ChEBI" id="CHEBI:15377"/>
        <dbReference type="ChEBI" id="CHEBI:15378"/>
        <dbReference type="ChEBI" id="CHEBI:33019"/>
        <dbReference type="ChEBI" id="CHEBI:37565"/>
        <dbReference type="ChEBI" id="CHEBI:58115"/>
        <dbReference type="ChEBI" id="CHEBI:83064"/>
        <dbReference type="ChEBI" id="CHEBI:138284"/>
        <dbReference type="ChEBI" id="CHEBI:173118"/>
        <dbReference type="EC" id="6.5.1.8"/>
    </reaction>
</comment>
<comment type="cofactor">
    <cofactor evidence="1">
        <name>Mn(2+)</name>
        <dbReference type="ChEBI" id="CHEBI:29035"/>
    </cofactor>
    <text evidence="1">Binds 2 manganese ions per subunit.</text>
</comment>
<comment type="subunit">
    <text evidence="1">Monomer.</text>
</comment>
<comment type="miscellaneous">
    <text evidence="1">Ligation proceeds through 3 nucleotidyl transfer steps, with 2',3'-cyclic phosphate termini being hydrolyzed to 3'-P termini in a step that precedes 3'-P activation with GMP. In the first nucleotidyl transfer step, RtcB reacts with GTP to form a covalent RtcB-histidine-GMP intermediate with release of PPi; in the second step, the GMP moiety is transferred to the RNA 3'-P; in the third step, the 5'-OH from the opposite RNA strand attacks the activated 3'-P to form a 3',5'-phosphodiester bond and release GMP.</text>
</comment>
<comment type="similarity">
    <text evidence="3">Belongs to the RtcB family.</text>
</comment>
<protein>
    <recommendedName>
        <fullName evidence="1">tRNA-splicing ligase RtcB</fullName>
        <ecNumber evidence="1">6.5.1.8</ecNumber>
    </recommendedName>
    <alternativeName>
        <fullName evidence="1">3'-phosphate/5'-hydroxy nucleic acid ligase</fullName>
    </alternativeName>
</protein>
<reference key="1">
    <citation type="journal article" date="2005" name="Genome Res.">
        <title>Complete genome sequence of the hyperthermophilic archaeon Thermococcus kodakaraensis KOD1 and comparison with Pyrococcus genomes.</title>
        <authorList>
            <person name="Fukui T."/>
            <person name="Atomi H."/>
            <person name="Kanai T."/>
            <person name="Matsumi R."/>
            <person name="Fujiwara S."/>
            <person name="Imanaka T."/>
        </authorList>
    </citation>
    <scope>NUCLEOTIDE SEQUENCE [LARGE SCALE GENOMIC DNA]</scope>
    <source>
        <strain>ATCC BAA-918 / JCM 12380 / KOD1</strain>
    </source>
</reference>
<accession>Q5JCZ1</accession>
<keyword id="KW-0342">GTP-binding</keyword>
<keyword id="KW-0436">Ligase</keyword>
<keyword id="KW-0464">Manganese</keyword>
<keyword id="KW-0479">Metal-binding</keyword>
<keyword id="KW-0547">Nucleotide-binding</keyword>
<keyword id="KW-1185">Reference proteome</keyword>
<keyword id="KW-0819">tRNA processing</keyword>